<evidence type="ECO:0000250" key="1"/>
<evidence type="ECO:0000255" key="2">
    <source>
        <dbReference type="PROSITE-ProRule" id="PRU00108"/>
    </source>
</evidence>
<evidence type="ECO:0000256" key="3">
    <source>
        <dbReference type="SAM" id="MobiDB-lite"/>
    </source>
</evidence>
<evidence type="ECO:0000305" key="4"/>
<gene>
    <name type="primary">vax2-b</name>
    <name type="synonym">vax3</name>
</gene>
<name>VAX2B_XENLA</name>
<proteinExistence type="evidence at transcript level"/>
<accession>Q9IAX9</accession>
<dbReference type="EMBL" id="AF113517">
    <property type="protein sequence ID" value="AAF25692.1"/>
    <property type="molecule type" value="mRNA"/>
</dbReference>
<dbReference type="RefSeq" id="NP_001165675.1">
    <property type="nucleotide sequence ID" value="NM_001172204.1"/>
</dbReference>
<dbReference type="SMR" id="Q9IAX9"/>
<dbReference type="GeneID" id="100337605"/>
<dbReference type="KEGG" id="xla:100337605"/>
<dbReference type="AGR" id="Xenbase:XB-GENE-6464314"/>
<dbReference type="CTD" id="100337605"/>
<dbReference type="Xenbase" id="XB-GENE-6464314">
    <property type="gene designation" value="vax2.S"/>
</dbReference>
<dbReference type="OMA" id="GETDHCR"/>
<dbReference type="OrthoDB" id="6159439at2759"/>
<dbReference type="Proteomes" id="UP000186698">
    <property type="component" value="Chromosome 1S"/>
</dbReference>
<dbReference type="Bgee" id="100337605">
    <property type="expression patterns" value="Expressed in camera-type eye and 2 other cell types or tissues"/>
</dbReference>
<dbReference type="GO" id="GO:0005634">
    <property type="term" value="C:nucleus"/>
    <property type="evidence" value="ECO:0000318"/>
    <property type="project" value="GO_Central"/>
</dbReference>
<dbReference type="GO" id="GO:0000981">
    <property type="term" value="F:DNA-binding transcription factor activity, RNA polymerase II-specific"/>
    <property type="evidence" value="ECO:0000318"/>
    <property type="project" value="GO_Central"/>
</dbReference>
<dbReference type="GO" id="GO:0000978">
    <property type="term" value="F:RNA polymerase II cis-regulatory region sequence-specific DNA binding"/>
    <property type="evidence" value="ECO:0000318"/>
    <property type="project" value="GO_Central"/>
</dbReference>
<dbReference type="GO" id="GO:0007420">
    <property type="term" value="P:brain development"/>
    <property type="evidence" value="ECO:0000318"/>
    <property type="project" value="GO_Central"/>
</dbReference>
<dbReference type="GO" id="GO:0007417">
    <property type="term" value="P:central nervous system development"/>
    <property type="evidence" value="ECO:0000318"/>
    <property type="project" value="GO_Central"/>
</dbReference>
<dbReference type="GO" id="GO:0030182">
    <property type="term" value="P:neuron differentiation"/>
    <property type="evidence" value="ECO:0000318"/>
    <property type="project" value="GO_Central"/>
</dbReference>
<dbReference type="GO" id="GO:0006357">
    <property type="term" value="P:regulation of transcription by RNA polymerase II"/>
    <property type="evidence" value="ECO:0000318"/>
    <property type="project" value="GO_Central"/>
</dbReference>
<dbReference type="GO" id="GO:0016055">
    <property type="term" value="P:Wnt signaling pathway"/>
    <property type="evidence" value="ECO:0007669"/>
    <property type="project" value="UniProtKB-KW"/>
</dbReference>
<dbReference type="CDD" id="cd00086">
    <property type="entry name" value="homeodomain"/>
    <property type="match status" value="1"/>
</dbReference>
<dbReference type="FunFam" id="1.10.10.60:FF:000131">
    <property type="entry name" value="Ventral anterior homeobox 2"/>
    <property type="match status" value="1"/>
</dbReference>
<dbReference type="Gene3D" id="1.10.10.60">
    <property type="entry name" value="Homeodomain-like"/>
    <property type="match status" value="1"/>
</dbReference>
<dbReference type="InterPro" id="IPR050877">
    <property type="entry name" value="EMX-VAX-Noto_Homeobox_TFs"/>
</dbReference>
<dbReference type="InterPro" id="IPR001356">
    <property type="entry name" value="HD"/>
</dbReference>
<dbReference type="InterPro" id="IPR020479">
    <property type="entry name" value="HD_metazoa"/>
</dbReference>
<dbReference type="InterPro" id="IPR017970">
    <property type="entry name" value="Homeobox_CS"/>
</dbReference>
<dbReference type="InterPro" id="IPR009057">
    <property type="entry name" value="Homeodomain-like_sf"/>
</dbReference>
<dbReference type="InterPro" id="IPR000047">
    <property type="entry name" value="HTH_motif"/>
</dbReference>
<dbReference type="PANTHER" id="PTHR24339">
    <property type="entry name" value="HOMEOBOX PROTEIN EMX-RELATED"/>
    <property type="match status" value="1"/>
</dbReference>
<dbReference type="PANTHER" id="PTHR24339:SF34">
    <property type="entry name" value="VENTRAL ANTERIOR HOMEOBOX 2"/>
    <property type="match status" value="1"/>
</dbReference>
<dbReference type="Pfam" id="PF00046">
    <property type="entry name" value="Homeodomain"/>
    <property type="match status" value="1"/>
</dbReference>
<dbReference type="PRINTS" id="PR00024">
    <property type="entry name" value="HOMEOBOX"/>
</dbReference>
<dbReference type="PRINTS" id="PR00031">
    <property type="entry name" value="HTHREPRESSR"/>
</dbReference>
<dbReference type="SMART" id="SM00389">
    <property type="entry name" value="HOX"/>
    <property type="match status" value="1"/>
</dbReference>
<dbReference type="SUPFAM" id="SSF46689">
    <property type="entry name" value="Homeodomain-like"/>
    <property type="match status" value="1"/>
</dbReference>
<dbReference type="PROSITE" id="PS00027">
    <property type="entry name" value="HOMEOBOX_1"/>
    <property type="match status" value="1"/>
</dbReference>
<dbReference type="PROSITE" id="PS50071">
    <property type="entry name" value="HOMEOBOX_2"/>
    <property type="match status" value="1"/>
</dbReference>
<feature type="chain" id="PRO_0000240531" description="Ventral anterior homeobox 2b">
    <location>
        <begin position="1"/>
        <end position="294"/>
    </location>
</feature>
<feature type="DNA-binding region" description="Homeobox" evidence="2">
    <location>
        <begin position="98"/>
        <end position="157"/>
    </location>
</feature>
<feature type="region of interest" description="Disordered" evidence="3">
    <location>
        <begin position="1"/>
        <end position="27"/>
    </location>
</feature>
<feature type="region of interest" description="Disordered" evidence="3">
    <location>
        <begin position="43"/>
        <end position="65"/>
    </location>
</feature>
<feature type="region of interest" description="Disordered" evidence="3">
    <location>
        <begin position="149"/>
        <end position="168"/>
    </location>
</feature>
<feature type="region of interest" description="Disordered" evidence="3">
    <location>
        <begin position="190"/>
        <end position="223"/>
    </location>
</feature>
<feature type="region of interest" description="Disordered" evidence="3">
    <location>
        <begin position="272"/>
        <end position="294"/>
    </location>
</feature>
<feature type="compositionally biased region" description="Basic and acidic residues" evidence="3">
    <location>
        <begin position="1"/>
        <end position="10"/>
    </location>
</feature>
<feature type="compositionally biased region" description="Basic and acidic residues" evidence="3">
    <location>
        <begin position="154"/>
        <end position="165"/>
    </location>
</feature>
<feature type="compositionally biased region" description="Low complexity" evidence="3">
    <location>
        <begin position="197"/>
        <end position="219"/>
    </location>
</feature>
<feature type="compositionally biased region" description="Basic and acidic residues" evidence="3">
    <location>
        <begin position="279"/>
        <end position="288"/>
    </location>
</feature>
<keyword id="KW-0217">Developmental protein</keyword>
<keyword id="KW-0238">DNA-binding</keyword>
<keyword id="KW-0371">Homeobox</keyword>
<keyword id="KW-0539">Nucleus</keyword>
<keyword id="KW-1185">Reference proteome</keyword>
<keyword id="KW-0804">Transcription</keyword>
<keyword id="KW-0805">Transcription regulation</keyword>
<keyword id="KW-0879">Wnt signaling pathway</keyword>
<protein>
    <recommendedName>
        <fullName>Ventral anterior homeobox 2b</fullName>
    </recommendedName>
    <alternativeName>
        <fullName>Ventral anterior homeobox 3</fullName>
    </alternativeName>
</protein>
<organism>
    <name type="scientific">Xenopus laevis</name>
    <name type="common">African clawed frog</name>
    <dbReference type="NCBI Taxonomy" id="8355"/>
    <lineage>
        <taxon>Eukaryota</taxon>
        <taxon>Metazoa</taxon>
        <taxon>Chordata</taxon>
        <taxon>Craniata</taxon>
        <taxon>Vertebrata</taxon>
        <taxon>Euteleostomi</taxon>
        <taxon>Amphibia</taxon>
        <taxon>Batrachia</taxon>
        <taxon>Anura</taxon>
        <taxon>Pipoidea</taxon>
        <taxon>Pipidae</taxon>
        <taxon>Xenopodinae</taxon>
        <taxon>Xenopus</taxon>
        <taxon>Xenopus</taxon>
    </lineage>
</organism>
<reference key="1">
    <citation type="submission" date="1998-12" db="EMBL/GenBank/DDBJ databases">
        <title>Xenopus Vax3: a novel member of the Vax homeobox gene subfamily.</title>
        <authorList>
            <person name="Bertuzzi S."/>
            <person name="Mui S.H."/>
            <person name="Lemke G."/>
        </authorList>
    </citation>
    <scope>NUCLEOTIDE SEQUENCE [MRNA]</scope>
</reference>
<sequence>MGDGVSEERSPLCGKSATSCSERVRDRGTRADLECSLRGHSLKDIPVTSTSSPGSSKEEVLDSQSPGEADYCRRILVRDAKGTIREIVLPKGLDLDRPKRTRTSFTAEQLYRLELEFQRCQYVVGRERTELARQLNLSETQVKVWFQNRRTKQKKDQSRDSEKRSSSTSESFATCNILRLLEQGRLLSVPAPPNMISSQNNMGTSSGNGTSLGTSGSTSPVISTTPPGAGAFSLQVPSLAASSSPRLPTPFYFPGPLLGGLHEIPSGYGLGSSAFEPYTRLDRKDTASGKKSTS</sequence>
<comment type="function">
    <text evidence="1">Transcription factor that may function in dorsoventral specification of the forebrain. Regulates the expression of Wnt signaling antagonists (By similarity).</text>
</comment>
<comment type="subcellular location">
    <subcellularLocation>
        <location evidence="2">Nucleus</location>
    </subcellularLocation>
</comment>
<comment type="similarity">
    <text evidence="4">Belongs to the EMX homeobox family.</text>
</comment>